<comment type="function">
    <text evidence="1">The RecF protein is involved in DNA metabolism; it is required for DNA replication and normal SOS inducibility. RecF binds preferentially to single-stranded, linear DNA. It also seems to bind ATP.</text>
</comment>
<comment type="subcellular location">
    <subcellularLocation>
        <location evidence="1">Cytoplasm</location>
    </subcellularLocation>
</comment>
<comment type="similarity">
    <text evidence="1">Belongs to the RecF family.</text>
</comment>
<evidence type="ECO:0000255" key="1">
    <source>
        <dbReference type="HAMAP-Rule" id="MF_00365"/>
    </source>
</evidence>
<proteinExistence type="inferred from homology"/>
<organism>
    <name type="scientific">Salinispora tropica (strain ATCC BAA-916 / DSM 44818 / JCM 13857 / NBRC 105044 / CNB-440)</name>
    <dbReference type="NCBI Taxonomy" id="369723"/>
    <lineage>
        <taxon>Bacteria</taxon>
        <taxon>Bacillati</taxon>
        <taxon>Actinomycetota</taxon>
        <taxon>Actinomycetes</taxon>
        <taxon>Micromonosporales</taxon>
        <taxon>Micromonosporaceae</taxon>
        <taxon>Salinispora</taxon>
    </lineage>
</organism>
<accession>A4X0U0</accession>
<feature type="chain" id="PRO_1000079603" description="DNA replication and repair protein RecF">
    <location>
        <begin position="1"/>
        <end position="377"/>
    </location>
</feature>
<feature type="binding site" evidence="1">
    <location>
        <begin position="30"/>
        <end position="37"/>
    </location>
    <ligand>
        <name>ATP</name>
        <dbReference type="ChEBI" id="CHEBI:30616"/>
    </ligand>
</feature>
<protein>
    <recommendedName>
        <fullName evidence="1">DNA replication and repair protein RecF</fullName>
    </recommendedName>
</protein>
<keyword id="KW-0067">ATP-binding</keyword>
<keyword id="KW-0963">Cytoplasm</keyword>
<keyword id="KW-0227">DNA damage</keyword>
<keyword id="KW-0234">DNA repair</keyword>
<keyword id="KW-0235">DNA replication</keyword>
<keyword id="KW-0238">DNA-binding</keyword>
<keyword id="KW-0547">Nucleotide-binding</keyword>
<keyword id="KW-1185">Reference proteome</keyword>
<keyword id="KW-0742">SOS response</keyword>
<sequence>MYVRRLELVDFRSYERVGVDLEPGANVLVGPNGVGKTNLIEALGYVATLDSHRVATDAPLVRMGAAAGIIRCAVVHEGRELLVELEIVPGRANRARLGRSPARRARDVLGALRLVLFAPEDLELVRGDPAQRRRYLDDLLVLRQPRYAGVRTDYERVVRQRNALLRTAYLARKTGGTRGGDLSTLAVWDDHLARHGAELLAGRLDLVAALAPHVNRAYDAVAAGAGAAGIAYRSSVELASSTADRADLTAALSDALAAGRTAEIERGTTLVGPHRDELTLTLGPLPAKGYASHGESWSFALALRLAGYDLLRADGIEPVLVLDDVFAELDTGRRDRLAELVGDASQLLVTCAVEEDLPARLRGARFVVREGEVQRVG</sequence>
<dbReference type="EMBL" id="CP000667">
    <property type="protein sequence ID" value="ABP52490.1"/>
    <property type="molecule type" value="Genomic_DNA"/>
</dbReference>
<dbReference type="RefSeq" id="WP_011903927.1">
    <property type="nucleotide sequence ID" value="NC_009380.1"/>
</dbReference>
<dbReference type="SMR" id="A4X0U0"/>
<dbReference type="STRING" id="369723.Strop_0005"/>
<dbReference type="KEGG" id="stp:Strop_0005"/>
<dbReference type="PATRIC" id="fig|369723.5.peg.5"/>
<dbReference type="eggNOG" id="COG1195">
    <property type="taxonomic scope" value="Bacteria"/>
</dbReference>
<dbReference type="HOGENOM" id="CLU_040267_1_1_11"/>
<dbReference type="Proteomes" id="UP000000235">
    <property type="component" value="Chromosome"/>
</dbReference>
<dbReference type="GO" id="GO:0005737">
    <property type="term" value="C:cytoplasm"/>
    <property type="evidence" value="ECO:0007669"/>
    <property type="project" value="UniProtKB-SubCell"/>
</dbReference>
<dbReference type="GO" id="GO:0005524">
    <property type="term" value="F:ATP binding"/>
    <property type="evidence" value="ECO:0007669"/>
    <property type="project" value="UniProtKB-UniRule"/>
</dbReference>
<dbReference type="GO" id="GO:0003697">
    <property type="term" value="F:single-stranded DNA binding"/>
    <property type="evidence" value="ECO:0007669"/>
    <property type="project" value="UniProtKB-UniRule"/>
</dbReference>
<dbReference type="GO" id="GO:0006260">
    <property type="term" value="P:DNA replication"/>
    <property type="evidence" value="ECO:0007669"/>
    <property type="project" value="UniProtKB-UniRule"/>
</dbReference>
<dbReference type="GO" id="GO:0000731">
    <property type="term" value="P:DNA synthesis involved in DNA repair"/>
    <property type="evidence" value="ECO:0007669"/>
    <property type="project" value="TreeGrafter"/>
</dbReference>
<dbReference type="GO" id="GO:0006302">
    <property type="term" value="P:double-strand break repair"/>
    <property type="evidence" value="ECO:0007669"/>
    <property type="project" value="TreeGrafter"/>
</dbReference>
<dbReference type="GO" id="GO:0009432">
    <property type="term" value="P:SOS response"/>
    <property type="evidence" value="ECO:0007669"/>
    <property type="project" value="UniProtKB-UniRule"/>
</dbReference>
<dbReference type="Gene3D" id="3.40.50.300">
    <property type="entry name" value="P-loop containing nucleotide triphosphate hydrolases"/>
    <property type="match status" value="1"/>
</dbReference>
<dbReference type="Gene3D" id="1.20.1050.90">
    <property type="entry name" value="RecF/RecN/SMC, N-terminal domain"/>
    <property type="match status" value="1"/>
</dbReference>
<dbReference type="HAMAP" id="MF_00365">
    <property type="entry name" value="RecF"/>
    <property type="match status" value="1"/>
</dbReference>
<dbReference type="InterPro" id="IPR001238">
    <property type="entry name" value="DNA-binding_RecF"/>
</dbReference>
<dbReference type="InterPro" id="IPR018078">
    <property type="entry name" value="DNA-binding_RecF_CS"/>
</dbReference>
<dbReference type="InterPro" id="IPR027417">
    <property type="entry name" value="P-loop_NTPase"/>
</dbReference>
<dbReference type="InterPro" id="IPR003395">
    <property type="entry name" value="RecF/RecN/SMC_N"/>
</dbReference>
<dbReference type="InterPro" id="IPR042174">
    <property type="entry name" value="RecF_2"/>
</dbReference>
<dbReference type="NCBIfam" id="TIGR00611">
    <property type="entry name" value="recf"/>
    <property type="match status" value="1"/>
</dbReference>
<dbReference type="PANTHER" id="PTHR32182">
    <property type="entry name" value="DNA REPLICATION AND REPAIR PROTEIN RECF"/>
    <property type="match status" value="1"/>
</dbReference>
<dbReference type="PANTHER" id="PTHR32182:SF0">
    <property type="entry name" value="DNA REPLICATION AND REPAIR PROTEIN RECF"/>
    <property type="match status" value="1"/>
</dbReference>
<dbReference type="Pfam" id="PF02463">
    <property type="entry name" value="SMC_N"/>
    <property type="match status" value="1"/>
</dbReference>
<dbReference type="SUPFAM" id="SSF52540">
    <property type="entry name" value="P-loop containing nucleoside triphosphate hydrolases"/>
    <property type="match status" value="1"/>
</dbReference>
<dbReference type="PROSITE" id="PS00617">
    <property type="entry name" value="RECF_1"/>
    <property type="match status" value="1"/>
</dbReference>
<dbReference type="PROSITE" id="PS00618">
    <property type="entry name" value="RECF_2"/>
    <property type="match status" value="1"/>
</dbReference>
<name>RECF_SALTO</name>
<gene>
    <name evidence="1" type="primary">recF</name>
    <name type="ordered locus">Strop_0005</name>
</gene>
<reference key="1">
    <citation type="journal article" date="2007" name="Proc. Natl. Acad. Sci. U.S.A.">
        <title>Genome sequencing reveals complex secondary metabolome in the marine actinomycete Salinispora tropica.</title>
        <authorList>
            <person name="Udwary D.W."/>
            <person name="Zeigler L."/>
            <person name="Asolkar R.N."/>
            <person name="Singan V."/>
            <person name="Lapidus A."/>
            <person name="Fenical W."/>
            <person name="Jensen P.R."/>
            <person name="Moore B.S."/>
        </authorList>
    </citation>
    <scope>NUCLEOTIDE SEQUENCE [LARGE SCALE GENOMIC DNA]</scope>
    <source>
        <strain>ATCC BAA-916 / DSM 44818 / JCM 13857 / NBRC 105044 / CNB-440</strain>
    </source>
</reference>